<dbReference type="EMBL" id="AM884177">
    <property type="protein sequence ID" value="CAP07070.1"/>
    <property type="molecule type" value="Genomic_DNA"/>
</dbReference>
<dbReference type="RefSeq" id="WP_009871772.1">
    <property type="nucleotide sequence ID" value="NC_010280.2"/>
</dbReference>
<dbReference type="SMR" id="B0BC55"/>
<dbReference type="KEGG" id="ctl:CTLon_0673"/>
<dbReference type="HOGENOM" id="CLU_061463_3_2_0"/>
<dbReference type="Proteomes" id="UP001154401">
    <property type="component" value="Chromosome"/>
</dbReference>
<dbReference type="GO" id="GO:0005737">
    <property type="term" value="C:cytoplasm"/>
    <property type="evidence" value="ECO:0007669"/>
    <property type="project" value="UniProtKB-ARBA"/>
</dbReference>
<dbReference type="GO" id="GO:1990904">
    <property type="term" value="C:ribonucleoprotein complex"/>
    <property type="evidence" value="ECO:0007669"/>
    <property type="project" value="UniProtKB-KW"/>
</dbReference>
<dbReference type="GO" id="GO:0005840">
    <property type="term" value="C:ribosome"/>
    <property type="evidence" value="ECO:0007669"/>
    <property type="project" value="UniProtKB-KW"/>
</dbReference>
<dbReference type="GO" id="GO:0019843">
    <property type="term" value="F:rRNA binding"/>
    <property type="evidence" value="ECO:0007669"/>
    <property type="project" value="UniProtKB-UniRule"/>
</dbReference>
<dbReference type="GO" id="GO:0003735">
    <property type="term" value="F:structural constituent of ribosome"/>
    <property type="evidence" value="ECO:0007669"/>
    <property type="project" value="InterPro"/>
</dbReference>
<dbReference type="GO" id="GO:0006412">
    <property type="term" value="P:translation"/>
    <property type="evidence" value="ECO:0007669"/>
    <property type="project" value="UniProtKB-UniRule"/>
</dbReference>
<dbReference type="HAMAP" id="MF_01363">
    <property type="entry name" value="Ribosomal_bL21"/>
    <property type="match status" value="1"/>
</dbReference>
<dbReference type="InterPro" id="IPR028909">
    <property type="entry name" value="bL21-like"/>
</dbReference>
<dbReference type="InterPro" id="IPR036164">
    <property type="entry name" value="bL21-like_sf"/>
</dbReference>
<dbReference type="InterPro" id="IPR001787">
    <property type="entry name" value="Ribosomal_bL21"/>
</dbReference>
<dbReference type="InterPro" id="IPR018258">
    <property type="entry name" value="Ribosomal_bL21_CS"/>
</dbReference>
<dbReference type="NCBIfam" id="TIGR00061">
    <property type="entry name" value="L21"/>
    <property type="match status" value="1"/>
</dbReference>
<dbReference type="PANTHER" id="PTHR21349">
    <property type="entry name" value="50S RIBOSOMAL PROTEIN L21"/>
    <property type="match status" value="1"/>
</dbReference>
<dbReference type="PANTHER" id="PTHR21349:SF0">
    <property type="entry name" value="LARGE RIBOSOMAL SUBUNIT PROTEIN BL21M"/>
    <property type="match status" value="1"/>
</dbReference>
<dbReference type="Pfam" id="PF00829">
    <property type="entry name" value="Ribosomal_L21p"/>
    <property type="match status" value="1"/>
</dbReference>
<dbReference type="SUPFAM" id="SSF141091">
    <property type="entry name" value="L21p-like"/>
    <property type="match status" value="1"/>
</dbReference>
<dbReference type="PROSITE" id="PS01169">
    <property type="entry name" value="RIBOSOMAL_L21"/>
    <property type="match status" value="1"/>
</dbReference>
<name>RL21_CHLTB</name>
<reference key="1">
    <citation type="journal article" date="2008" name="Genome Res.">
        <title>Chlamydia trachomatis: genome sequence analysis of lymphogranuloma venereum isolates.</title>
        <authorList>
            <person name="Thomson N.R."/>
            <person name="Holden M.T.G."/>
            <person name="Carder C."/>
            <person name="Lennard N."/>
            <person name="Lockey S.J."/>
            <person name="Marsh P."/>
            <person name="Skipp P."/>
            <person name="O'Connor C.D."/>
            <person name="Goodhead I."/>
            <person name="Norbertzcak H."/>
            <person name="Harris B."/>
            <person name="Ormond D."/>
            <person name="Rance R."/>
            <person name="Quail M.A."/>
            <person name="Parkhill J."/>
            <person name="Stephens R.S."/>
            <person name="Clarke I.N."/>
        </authorList>
    </citation>
    <scope>NUCLEOTIDE SEQUENCE [LARGE SCALE GENOMIC DNA]</scope>
    <source>
        <strain>UCH-1/proctitis</strain>
    </source>
</reference>
<proteinExistence type="inferred from homology"/>
<gene>
    <name evidence="1" type="primary">rplU</name>
    <name type="ordered locus">CTLon_0673</name>
</gene>
<keyword id="KW-0687">Ribonucleoprotein</keyword>
<keyword id="KW-0689">Ribosomal protein</keyword>
<keyword id="KW-0694">RNA-binding</keyword>
<keyword id="KW-0699">rRNA-binding</keyword>
<comment type="function">
    <text evidence="1">This protein binds to 23S rRNA in the presence of protein L20.</text>
</comment>
<comment type="subunit">
    <text evidence="1">Part of the 50S ribosomal subunit. Contacts protein L20.</text>
</comment>
<comment type="similarity">
    <text evidence="1">Belongs to the bacterial ribosomal protein bL21 family.</text>
</comment>
<accession>B0BC55</accession>
<organism>
    <name type="scientific">Chlamydia trachomatis serovar L2b (strain UCH-1/proctitis)</name>
    <dbReference type="NCBI Taxonomy" id="471473"/>
    <lineage>
        <taxon>Bacteria</taxon>
        <taxon>Pseudomonadati</taxon>
        <taxon>Chlamydiota</taxon>
        <taxon>Chlamydiia</taxon>
        <taxon>Chlamydiales</taxon>
        <taxon>Chlamydiaceae</taxon>
        <taxon>Chlamydia/Chlamydophila group</taxon>
        <taxon>Chlamydia</taxon>
    </lineage>
</organism>
<feature type="chain" id="PRO_1000143772" description="Large ribosomal subunit protein bL21">
    <location>
        <begin position="1"/>
        <end position="107"/>
    </location>
</feature>
<evidence type="ECO:0000255" key="1">
    <source>
        <dbReference type="HAMAP-Rule" id="MF_01363"/>
    </source>
</evidence>
<evidence type="ECO:0000305" key="2"/>
<protein>
    <recommendedName>
        <fullName evidence="1">Large ribosomal subunit protein bL21</fullName>
    </recommendedName>
    <alternativeName>
        <fullName evidence="2">50S ribosomal protein L21</fullName>
    </alternativeName>
</protein>
<sequence length="107" mass="12163">MEPYAVIQTGNKQYQVRKGDVIDVELLDGISEENKEVLFQDVLFTFDGEKASVGAPTVGNAVVKGELVSFVRGEKVVAYKYKKRKNYHKKIGHRQNYLRVKISDLVM</sequence>